<name>PANC_SHEDO</name>
<sequence length="281" mass="30584">MITSSDVSTIRAQVRSWRSQGESVAFVPTMGNLHQGHITLVKEAKLRAKHVVVSIFVNPMQFGQHEDLDAYPRTLAADSQALIDAGAALLFTPTAQTIYPKGLQQQTFVEVPEIGDVFCGASRPGHFRGVATIVCKLFNIVQPDIALFGRKDFQQLLVIKHMVNDLSLGIDIIGIDTIREASGLAMSSRNGYLTPEQKHTAATIKRALDLIANAVRQGEAIDKATAEGEAMIVQAGFKLDYLSVCNADNLHPAQADDKQLVILVAAYLGTTRLIDNLCFSR</sequence>
<reference key="1">
    <citation type="submission" date="2006-03" db="EMBL/GenBank/DDBJ databases">
        <title>Complete sequence of Shewanella denitrificans OS217.</title>
        <authorList>
            <consortium name="US DOE Joint Genome Institute"/>
            <person name="Copeland A."/>
            <person name="Lucas S."/>
            <person name="Lapidus A."/>
            <person name="Barry K."/>
            <person name="Detter J.C."/>
            <person name="Glavina del Rio T."/>
            <person name="Hammon N."/>
            <person name="Israni S."/>
            <person name="Dalin E."/>
            <person name="Tice H."/>
            <person name="Pitluck S."/>
            <person name="Brettin T."/>
            <person name="Bruce D."/>
            <person name="Han C."/>
            <person name="Tapia R."/>
            <person name="Gilna P."/>
            <person name="Kiss H."/>
            <person name="Schmutz J."/>
            <person name="Larimer F."/>
            <person name="Land M."/>
            <person name="Hauser L."/>
            <person name="Kyrpides N."/>
            <person name="Lykidis A."/>
            <person name="Richardson P."/>
        </authorList>
    </citation>
    <scope>NUCLEOTIDE SEQUENCE [LARGE SCALE GENOMIC DNA]</scope>
    <source>
        <strain>OS217 / ATCC BAA-1090 / DSM 15013</strain>
    </source>
</reference>
<keyword id="KW-0067">ATP-binding</keyword>
<keyword id="KW-0963">Cytoplasm</keyword>
<keyword id="KW-0436">Ligase</keyword>
<keyword id="KW-0547">Nucleotide-binding</keyword>
<keyword id="KW-0566">Pantothenate biosynthesis</keyword>
<keyword id="KW-1185">Reference proteome</keyword>
<protein>
    <recommendedName>
        <fullName evidence="1">Pantothenate synthetase</fullName>
        <shortName evidence="1">PS</shortName>
        <ecNumber evidence="1">6.3.2.1</ecNumber>
    </recommendedName>
    <alternativeName>
        <fullName evidence="1">Pantoate--beta-alanine ligase</fullName>
    </alternativeName>
    <alternativeName>
        <fullName evidence="1">Pantoate-activating enzyme</fullName>
    </alternativeName>
</protein>
<evidence type="ECO:0000255" key="1">
    <source>
        <dbReference type="HAMAP-Rule" id="MF_00158"/>
    </source>
</evidence>
<gene>
    <name evidence="1" type="primary">panC</name>
    <name type="ordered locus">Sden_3175</name>
</gene>
<comment type="function">
    <text evidence="1">Catalyzes the condensation of pantoate with beta-alanine in an ATP-dependent reaction via a pantoyl-adenylate intermediate.</text>
</comment>
<comment type="catalytic activity">
    <reaction evidence="1">
        <text>(R)-pantoate + beta-alanine + ATP = (R)-pantothenate + AMP + diphosphate + H(+)</text>
        <dbReference type="Rhea" id="RHEA:10912"/>
        <dbReference type="ChEBI" id="CHEBI:15378"/>
        <dbReference type="ChEBI" id="CHEBI:15980"/>
        <dbReference type="ChEBI" id="CHEBI:29032"/>
        <dbReference type="ChEBI" id="CHEBI:30616"/>
        <dbReference type="ChEBI" id="CHEBI:33019"/>
        <dbReference type="ChEBI" id="CHEBI:57966"/>
        <dbReference type="ChEBI" id="CHEBI:456215"/>
        <dbReference type="EC" id="6.3.2.1"/>
    </reaction>
</comment>
<comment type="pathway">
    <text evidence="1">Cofactor biosynthesis; (R)-pantothenate biosynthesis; (R)-pantothenate from (R)-pantoate and beta-alanine: step 1/1.</text>
</comment>
<comment type="subunit">
    <text evidence="1">Homodimer.</text>
</comment>
<comment type="subcellular location">
    <subcellularLocation>
        <location evidence="1">Cytoplasm</location>
    </subcellularLocation>
</comment>
<comment type="miscellaneous">
    <text evidence="1">The reaction proceeds by a bi uni uni bi ping pong mechanism.</text>
</comment>
<comment type="similarity">
    <text evidence="1">Belongs to the pantothenate synthetase family.</text>
</comment>
<feature type="chain" id="PRO_0000305545" description="Pantothenate synthetase">
    <location>
        <begin position="1"/>
        <end position="281"/>
    </location>
</feature>
<feature type="active site" description="Proton donor" evidence="1">
    <location>
        <position position="37"/>
    </location>
</feature>
<feature type="binding site" evidence="1">
    <location>
        <begin position="30"/>
        <end position="37"/>
    </location>
    <ligand>
        <name>ATP</name>
        <dbReference type="ChEBI" id="CHEBI:30616"/>
    </ligand>
</feature>
<feature type="binding site" evidence="1">
    <location>
        <position position="61"/>
    </location>
    <ligand>
        <name>(R)-pantoate</name>
        <dbReference type="ChEBI" id="CHEBI:15980"/>
    </ligand>
</feature>
<feature type="binding site" evidence="1">
    <location>
        <position position="61"/>
    </location>
    <ligand>
        <name>beta-alanine</name>
        <dbReference type="ChEBI" id="CHEBI:57966"/>
    </ligand>
</feature>
<feature type="binding site" evidence="1">
    <location>
        <begin position="149"/>
        <end position="152"/>
    </location>
    <ligand>
        <name>ATP</name>
        <dbReference type="ChEBI" id="CHEBI:30616"/>
    </ligand>
</feature>
<feature type="binding site" evidence="1">
    <location>
        <position position="155"/>
    </location>
    <ligand>
        <name>(R)-pantoate</name>
        <dbReference type="ChEBI" id="CHEBI:15980"/>
    </ligand>
</feature>
<feature type="binding site" evidence="1">
    <location>
        <position position="178"/>
    </location>
    <ligand>
        <name>ATP</name>
        <dbReference type="ChEBI" id="CHEBI:30616"/>
    </ligand>
</feature>
<feature type="binding site" evidence="1">
    <location>
        <begin position="186"/>
        <end position="189"/>
    </location>
    <ligand>
        <name>ATP</name>
        <dbReference type="ChEBI" id="CHEBI:30616"/>
    </ligand>
</feature>
<proteinExistence type="inferred from homology"/>
<accession>Q12JC5</accession>
<dbReference type="EC" id="6.3.2.1" evidence="1"/>
<dbReference type="EMBL" id="CP000302">
    <property type="protein sequence ID" value="ABE56451.1"/>
    <property type="molecule type" value="Genomic_DNA"/>
</dbReference>
<dbReference type="RefSeq" id="WP_011497596.1">
    <property type="nucleotide sequence ID" value="NC_007954.1"/>
</dbReference>
<dbReference type="SMR" id="Q12JC5"/>
<dbReference type="STRING" id="318161.Sden_3175"/>
<dbReference type="KEGG" id="sdn:Sden_3175"/>
<dbReference type="eggNOG" id="COG0414">
    <property type="taxonomic scope" value="Bacteria"/>
</dbReference>
<dbReference type="HOGENOM" id="CLU_047148_0_0_6"/>
<dbReference type="OrthoDB" id="9773087at2"/>
<dbReference type="UniPathway" id="UPA00028">
    <property type="reaction ID" value="UER00005"/>
</dbReference>
<dbReference type="Proteomes" id="UP000001982">
    <property type="component" value="Chromosome"/>
</dbReference>
<dbReference type="GO" id="GO:0005829">
    <property type="term" value="C:cytosol"/>
    <property type="evidence" value="ECO:0007669"/>
    <property type="project" value="TreeGrafter"/>
</dbReference>
<dbReference type="GO" id="GO:0005524">
    <property type="term" value="F:ATP binding"/>
    <property type="evidence" value="ECO:0007669"/>
    <property type="project" value="UniProtKB-KW"/>
</dbReference>
<dbReference type="GO" id="GO:0004592">
    <property type="term" value="F:pantoate-beta-alanine ligase activity"/>
    <property type="evidence" value="ECO:0007669"/>
    <property type="project" value="UniProtKB-UniRule"/>
</dbReference>
<dbReference type="GO" id="GO:0015940">
    <property type="term" value="P:pantothenate biosynthetic process"/>
    <property type="evidence" value="ECO:0007669"/>
    <property type="project" value="UniProtKB-UniRule"/>
</dbReference>
<dbReference type="CDD" id="cd00560">
    <property type="entry name" value="PanC"/>
    <property type="match status" value="1"/>
</dbReference>
<dbReference type="FunFam" id="3.40.50.620:FF:000013">
    <property type="entry name" value="Pantothenate synthetase"/>
    <property type="match status" value="1"/>
</dbReference>
<dbReference type="Gene3D" id="3.40.50.620">
    <property type="entry name" value="HUPs"/>
    <property type="match status" value="1"/>
</dbReference>
<dbReference type="Gene3D" id="3.30.1300.10">
    <property type="entry name" value="Pantoate-beta-alanine ligase, C-terminal domain"/>
    <property type="match status" value="1"/>
</dbReference>
<dbReference type="HAMAP" id="MF_00158">
    <property type="entry name" value="PanC"/>
    <property type="match status" value="1"/>
</dbReference>
<dbReference type="InterPro" id="IPR004821">
    <property type="entry name" value="Cyt_trans-like"/>
</dbReference>
<dbReference type="InterPro" id="IPR003721">
    <property type="entry name" value="Pantoate_ligase"/>
</dbReference>
<dbReference type="InterPro" id="IPR042176">
    <property type="entry name" value="Pantoate_ligase_C"/>
</dbReference>
<dbReference type="InterPro" id="IPR014729">
    <property type="entry name" value="Rossmann-like_a/b/a_fold"/>
</dbReference>
<dbReference type="NCBIfam" id="TIGR00125">
    <property type="entry name" value="cyt_tran_rel"/>
    <property type="match status" value="1"/>
</dbReference>
<dbReference type="NCBIfam" id="TIGR00018">
    <property type="entry name" value="panC"/>
    <property type="match status" value="1"/>
</dbReference>
<dbReference type="PANTHER" id="PTHR21299">
    <property type="entry name" value="CYTIDYLATE KINASE/PANTOATE-BETA-ALANINE LIGASE"/>
    <property type="match status" value="1"/>
</dbReference>
<dbReference type="PANTHER" id="PTHR21299:SF1">
    <property type="entry name" value="PANTOATE--BETA-ALANINE LIGASE"/>
    <property type="match status" value="1"/>
</dbReference>
<dbReference type="Pfam" id="PF02569">
    <property type="entry name" value="Pantoate_ligase"/>
    <property type="match status" value="1"/>
</dbReference>
<dbReference type="SUPFAM" id="SSF52374">
    <property type="entry name" value="Nucleotidylyl transferase"/>
    <property type="match status" value="1"/>
</dbReference>
<organism>
    <name type="scientific">Shewanella denitrificans (strain OS217 / ATCC BAA-1090 / DSM 15013)</name>
    <dbReference type="NCBI Taxonomy" id="318161"/>
    <lineage>
        <taxon>Bacteria</taxon>
        <taxon>Pseudomonadati</taxon>
        <taxon>Pseudomonadota</taxon>
        <taxon>Gammaproteobacteria</taxon>
        <taxon>Alteromonadales</taxon>
        <taxon>Shewanellaceae</taxon>
        <taxon>Shewanella</taxon>
    </lineage>
</organism>